<name>CM3F_CONMR</name>
<comment type="function">
    <text>Intracranially injection into mice does not elicit symptoms.</text>
</comment>
<comment type="subcellular location">
    <subcellularLocation>
        <location evidence="4">Secreted</location>
    </subcellularLocation>
</comment>
<comment type="tissue specificity">
    <text evidence="6">Expressed by the venom duct.</text>
</comment>
<comment type="domain">
    <text evidence="5">The cysteine framework is III (CC-C-C-CC). Classified in the M-1 branch, since 1 residue stands between the fourth and the fifth cysteine residues.</text>
</comment>
<comment type="mass spectrometry"/>
<comment type="similarity">
    <text evidence="5">Belongs to the conotoxin M superfamily.</text>
</comment>
<accession>P0C425</accession>
<accession>F6LPM8</accession>
<sequence>MLKMGVVLFIVLVLFPLATLQLDADKPVERYAENKQLLNPDERRGIILHALGQRVCCPFGGCHELCLCCDG</sequence>
<organism>
    <name type="scientific">Conus marmoreus</name>
    <name type="common">Marble cone</name>
    <dbReference type="NCBI Taxonomy" id="42752"/>
    <lineage>
        <taxon>Eukaryota</taxon>
        <taxon>Metazoa</taxon>
        <taxon>Spiralia</taxon>
        <taxon>Lophotrochozoa</taxon>
        <taxon>Mollusca</taxon>
        <taxon>Gastropoda</taxon>
        <taxon>Caenogastropoda</taxon>
        <taxon>Neogastropoda</taxon>
        <taxon>Conoidea</taxon>
        <taxon>Conidae</taxon>
        <taxon>Conus</taxon>
    </lineage>
</organism>
<dbReference type="EMBL" id="JF322916">
    <property type="protein sequence ID" value="ADZ74145.1"/>
    <property type="molecule type" value="mRNA"/>
</dbReference>
<dbReference type="SMR" id="P0C425"/>
<dbReference type="ConoServer" id="1485">
    <property type="toxin name" value="MrIIIF"/>
</dbReference>
<dbReference type="GO" id="GO:0005576">
    <property type="term" value="C:extracellular region"/>
    <property type="evidence" value="ECO:0007669"/>
    <property type="project" value="UniProtKB-SubCell"/>
</dbReference>
<dbReference type="GO" id="GO:0008200">
    <property type="term" value="F:ion channel inhibitor activity"/>
    <property type="evidence" value="ECO:0007669"/>
    <property type="project" value="InterPro"/>
</dbReference>
<dbReference type="GO" id="GO:0090729">
    <property type="term" value="F:toxin activity"/>
    <property type="evidence" value="ECO:0007669"/>
    <property type="project" value="UniProtKB-KW"/>
</dbReference>
<dbReference type="InterPro" id="IPR004214">
    <property type="entry name" value="Conotoxin"/>
</dbReference>
<dbReference type="Pfam" id="PF02950">
    <property type="entry name" value="Conotoxin"/>
    <property type="match status" value="1"/>
</dbReference>
<reference key="1">
    <citation type="journal article" date="2012" name="Toxicon">
        <title>Diversity and evolution of conotoxins in Conus virgo, Conus eburneus, Conus imperialis and Conus marmoreus from the South China Sea.</title>
        <authorList>
            <person name="Liu Z."/>
            <person name="Li H."/>
            <person name="Liu N."/>
            <person name="Wu C."/>
            <person name="Jiang J."/>
            <person name="Yue J."/>
            <person name="Jing Y."/>
            <person name="Dai Q."/>
        </authorList>
    </citation>
    <scope>NUCLEOTIDE SEQUENCE [MRNA]</scope>
    <source>
        <tissue>Venom gland</tissue>
    </source>
</reference>
<reference key="2">
    <citation type="journal article" date="2006" name="FEBS J.">
        <title>Characterization of novel M-superfamily conotoxins with new disulfide linkage.</title>
        <authorList>
            <person name="Han Y.-H."/>
            <person name="Wang Q."/>
            <person name="Jiang H."/>
            <person name="Liu L."/>
            <person name="Xiao C."/>
            <person name="Yuan D.-D."/>
            <person name="Shao X.-X."/>
            <person name="Dai Q.-Y."/>
            <person name="Cheng J.-S."/>
            <person name="Chi C.-W."/>
        </authorList>
    </citation>
    <scope>PROTEIN SEQUENCE OF 55-70</scope>
    <scope>AMIDATION AT ASP-70</scope>
    <scope>MASS SPECTROMETRY</scope>
    <scope>BIOASSAY</scope>
    <scope>SUBCELLULAR LOCATION</scope>
    <source>
        <tissue>Venom</tissue>
    </source>
</reference>
<keyword id="KW-0027">Amidation</keyword>
<keyword id="KW-0903">Direct protein sequencing</keyword>
<keyword id="KW-1015">Disulfide bond</keyword>
<keyword id="KW-0528">Neurotoxin</keyword>
<keyword id="KW-0964">Secreted</keyword>
<keyword id="KW-0732">Signal</keyword>
<keyword id="KW-0800">Toxin</keyword>
<protein>
    <recommendedName>
        <fullName>Conotoxin mr3f</fullName>
    </recommendedName>
    <alternativeName>
        <fullName>Conotoxin Mr3.9</fullName>
    </alternativeName>
</protein>
<evidence type="ECO:0000250" key="1">
    <source>
        <dbReference type="UniProtKB" id="Q5EHP3"/>
    </source>
</evidence>
<evidence type="ECO:0000255" key="2"/>
<evidence type="ECO:0000269" key="3">
    <source>
    </source>
</evidence>
<evidence type="ECO:0000269" key="4">
    <source>
    </source>
</evidence>
<evidence type="ECO:0000305" key="5"/>
<evidence type="ECO:0000305" key="6">
    <source>
    </source>
</evidence>
<feature type="signal peptide" evidence="2">
    <location>
        <begin position="1"/>
        <end position="24"/>
    </location>
</feature>
<feature type="propeptide" id="PRO_0000425739">
    <location>
        <begin position="25"/>
        <end position="53"/>
    </location>
</feature>
<feature type="peptide" id="PRO_0000289868" description="Conotoxin mr3f">
    <location>
        <begin position="55"/>
        <end position="70"/>
    </location>
</feature>
<feature type="modified residue" description="Aspartic acid 1-amide" evidence="3">
    <location>
        <position position="70"/>
    </location>
</feature>
<feature type="disulfide bond" evidence="1">
    <location>
        <begin position="56"/>
        <end position="68"/>
    </location>
</feature>
<feature type="disulfide bond" evidence="1">
    <location>
        <begin position="57"/>
        <end position="66"/>
    </location>
</feature>
<feature type="disulfide bond" evidence="1">
    <location>
        <begin position="62"/>
        <end position="69"/>
    </location>
</feature>
<proteinExistence type="evidence at protein level"/>